<reference key="1">
    <citation type="journal article" date="2007" name="PLoS Genet.">
        <title>The complete genome sequence of Yersinia pseudotuberculosis IP31758, the causative agent of Far East scarlet-like fever.</title>
        <authorList>
            <person name="Eppinger M."/>
            <person name="Rosovitz M.J."/>
            <person name="Fricke W.F."/>
            <person name="Rasko D.A."/>
            <person name="Kokorina G."/>
            <person name="Fayolle C."/>
            <person name="Lindler L.E."/>
            <person name="Carniel E."/>
            <person name="Ravel J."/>
        </authorList>
    </citation>
    <scope>NUCLEOTIDE SEQUENCE [LARGE SCALE GENOMIC DNA]</scope>
    <source>
        <strain>IP 31758</strain>
    </source>
</reference>
<evidence type="ECO:0000255" key="1">
    <source>
        <dbReference type="HAMAP-Rule" id="MF_01007"/>
    </source>
</evidence>
<dbReference type="EC" id="2.1.1.199" evidence="1"/>
<dbReference type="EMBL" id="CP000720">
    <property type="protein sequence ID" value="ABS46534.1"/>
    <property type="molecule type" value="Genomic_DNA"/>
</dbReference>
<dbReference type="RefSeq" id="WP_002210442.1">
    <property type="nucleotide sequence ID" value="NC_009708.1"/>
</dbReference>
<dbReference type="SMR" id="A7FM74"/>
<dbReference type="GeneID" id="57974068"/>
<dbReference type="KEGG" id="ypi:YpsIP31758_3395"/>
<dbReference type="HOGENOM" id="CLU_038422_2_0_6"/>
<dbReference type="Proteomes" id="UP000002412">
    <property type="component" value="Chromosome"/>
</dbReference>
<dbReference type="GO" id="GO:0005737">
    <property type="term" value="C:cytoplasm"/>
    <property type="evidence" value="ECO:0007669"/>
    <property type="project" value="UniProtKB-SubCell"/>
</dbReference>
<dbReference type="GO" id="GO:0071424">
    <property type="term" value="F:rRNA (cytosine-N4-)-methyltransferase activity"/>
    <property type="evidence" value="ECO:0007669"/>
    <property type="project" value="UniProtKB-UniRule"/>
</dbReference>
<dbReference type="GO" id="GO:0070475">
    <property type="term" value="P:rRNA base methylation"/>
    <property type="evidence" value="ECO:0007669"/>
    <property type="project" value="UniProtKB-UniRule"/>
</dbReference>
<dbReference type="FunFam" id="1.10.150.170:FF:000001">
    <property type="entry name" value="Ribosomal RNA small subunit methyltransferase H"/>
    <property type="match status" value="1"/>
</dbReference>
<dbReference type="Gene3D" id="1.10.150.170">
    <property type="entry name" value="Putative methyltransferase TM0872, insert domain"/>
    <property type="match status" value="1"/>
</dbReference>
<dbReference type="Gene3D" id="3.40.50.150">
    <property type="entry name" value="Vaccinia Virus protein VP39"/>
    <property type="match status" value="1"/>
</dbReference>
<dbReference type="HAMAP" id="MF_01007">
    <property type="entry name" value="16SrRNA_methyltr_H"/>
    <property type="match status" value="1"/>
</dbReference>
<dbReference type="InterPro" id="IPR002903">
    <property type="entry name" value="RsmH"/>
</dbReference>
<dbReference type="InterPro" id="IPR023397">
    <property type="entry name" value="SAM-dep_MeTrfase_MraW_recog"/>
</dbReference>
<dbReference type="InterPro" id="IPR029063">
    <property type="entry name" value="SAM-dependent_MTases_sf"/>
</dbReference>
<dbReference type="NCBIfam" id="TIGR00006">
    <property type="entry name" value="16S rRNA (cytosine(1402)-N(4))-methyltransferase RsmH"/>
    <property type="match status" value="1"/>
</dbReference>
<dbReference type="PANTHER" id="PTHR11265:SF0">
    <property type="entry name" value="12S RRNA N4-METHYLCYTIDINE METHYLTRANSFERASE"/>
    <property type="match status" value="1"/>
</dbReference>
<dbReference type="PANTHER" id="PTHR11265">
    <property type="entry name" value="S-ADENOSYL-METHYLTRANSFERASE MRAW"/>
    <property type="match status" value="1"/>
</dbReference>
<dbReference type="Pfam" id="PF01795">
    <property type="entry name" value="Methyltransf_5"/>
    <property type="match status" value="1"/>
</dbReference>
<dbReference type="PIRSF" id="PIRSF004486">
    <property type="entry name" value="MraW"/>
    <property type="match status" value="1"/>
</dbReference>
<dbReference type="SUPFAM" id="SSF81799">
    <property type="entry name" value="Putative methyltransferase TM0872, insert domain"/>
    <property type="match status" value="1"/>
</dbReference>
<dbReference type="SUPFAM" id="SSF53335">
    <property type="entry name" value="S-adenosyl-L-methionine-dependent methyltransferases"/>
    <property type="match status" value="1"/>
</dbReference>
<name>RSMH_YERP3</name>
<sequence length="320" mass="35590">MVDNNKTVDNNYKHTSVLLDEAVKGLNIRDNGIYIDGTFGRGGHSRLILSQLGPEGRLIAIDRDPEAIEAAKQITDPRFSIVHGPFSDLAHYVRDLDLVGRIDGILLDLGVSSPQLDDAERGFSFMRDGPLDMRMDPSRGLSAAEWLMKASADDIAWVLKTFGEERFAKRLAKAIVERNLTQPMTRTKELADLIANASPFRDKHKHPATRSFQAIRIYINSELEEIERALDGAHEVLAPEGRLSVISFHSLEDRIVKNFIRHHSRGPQVPAGLPLTEAQLRSMGGRTLKSVGKMMPGDAEIAENPRARSSVLRFAERIGE</sequence>
<feature type="chain" id="PRO_0000387224" description="Ribosomal RNA small subunit methyltransferase H">
    <location>
        <begin position="1"/>
        <end position="320"/>
    </location>
</feature>
<feature type="binding site" evidence="1">
    <location>
        <begin position="42"/>
        <end position="44"/>
    </location>
    <ligand>
        <name>S-adenosyl-L-methionine</name>
        <dbReference type="ChEBI" id="CHEBI:59789"/>
    </ligand>
</feature>
<feature type="binding site" evidence="1">
    <location>
        <position position="62"/>
    </location>
    <ligand>
        <name>S-adenosyl-L-methionine</name>
        <dbReference type="ChEBI" id="CHEBI:59789"/>
    </ligand>
</feature>
<feature type="binding site" evidence="1">
    <location>
        <position position="86"/>
    </location>
    <ligand>
        <name>S-adenosyl-L-methionine</name>
        <dbReference type="ChEBI" id="CHEBI:59789"/>
    </ligand>
</feature>
<feature type="binding site" evidence="1">
    <location>
        <position position="108"/>
    </location>
    <ligand>
        <name>S-adenosyl-L-methionine</name>
        <dbReference type="ChEBI" id="CHEBI:59789"/>
    </ligand>
</feature>
<feature type="binding site" evidence="1">
    <location>
        <position position="115"/>
    </location>
    <ligand>
        <name>S-adenosyl-L-methionine</name>
        <dbReference type="ChEBI" id="CHEBI:59789"/>
    </ligand>
</feature>
<organism>
    <name type="scientific">Yersinia pseudotuberculosis serotype O:1b (strain IP 31758)</name>
    <dbReference type="NCBI Taxonomy" id="349747"/>
    <lineage>
        <taxon>Bacteria</taxon>
        <taxon>Pseudomonadati</taxon>
        <taxon>Pseudomonadota</taxon>
        <taxon>Gammaproteobacteria</taxon>
        <taxon>Enterobacterales</taxon>
        <taxon>Yersiniaceae</taxon>
        <taxon>Yersinia</taxon>
    </lineage>
</organism>
<accession>A7FM74</accession>
<proteinExistence type="inferred from homology"/>
<keyword id="KW-0963">Cytoplasm</keyword>
<keyword id="KW-0489">Methyltransferase</keyword>
<keyword id="KW-0698">rRNA processing</keyword>
<keyword id="KW-0949">S-adenosyl-L-methionine</keyword>
<keyword id="KW-0808">Transferase</keyword>
<protein>
    <recommendedName>
        <fullName evidence="1">Ribosomal RNA small subunit methyltransferase H</fullName>
        <ecNumber evidence="1">2.1.1.199</ecNumber>
    </recommendedName>
    <alternativeName>
        <fullName evidence="1">16S rRNA m(4)C1402 methyltransferase</fullName>
    </alternativeName>
    <alternativeName>
        <fullName evidence="1">rRNA (cytosine-N(4)-)-methyltransferase RsmH</fullName>
    </alternativeName>
</protein>
<comment type="function">
    <text evidence="1">Specifically methylates the N4 position of cytidine in position 1402 (C1402) of 16S rRNA.</text>
</comment>
<comment type="catalytic activity">
    <reaction evidence="1">
        <text>cytidine(1402) in 16S rRNA + S-adenosyl-L-methionine = N(4)-methylcytidine(1402) in 16S rRNA + S-adenosyl-L-homocysteine + H(+)</text>
        <dbReference type="Rhea" id="RHEA:42928"/>
        <dbReference type="Rhea" id="RHEA-COMP:10286"/>
        <dbReference type="Rhea" id="RHEA-COMP:10287"/>
        <dbReference type="ChEBI" id="CHEBI:15378"/>
        <dbReference type="ChEBI" id="CHEBI:57856"/>
        <dbReference type="ChEBI" id="CHEBI:59789"/>
        <dbReference type="ChEBI" id="CHEBI:74506"/>
        <dbReference type="ChEBI" id="CHEBI:82748"/>
        <dbReference type="EC" id="2.1.1.199"/>
    </reaction>
</comment>
<comment type="subcellular location">
    <subcellularLocation>
        <location evidence="1">Cytoplasm</location>
    </subcellularLocation>
</comment>
<comment type="similarity">
    <text evidence="1">Belongs to the methyltransferase superfamily. RsmH family.</text>
</comment>
<gene>
    <name evidence="1" type="primary">rsmH</name>
    <name type="synonym">mraW</name>
    <name type="ordered locus">YpsIP31758_3395</name>
</gene>